<name>KDSB_RICM5</name>
<protein>
    <recommendedName>
        <fullName evidence="1">3-deoxy-manno-octulosonate cytidylyltransferase</fullName>
        <ecNumber evidence="1">2.7.7.38</ecNumber>
    </recommendedName>
    <alternativeName>
        <fullName evidence="1">CMP-2-keto-3-deoxyoctulosonic acid synthase</fullName>
        <shortName evidence="1">CKS</shortName>
        <shortName evidence="1">CMP-KDO synthase</shortName>
    </alternativeName>
</protein>
<gene>
    <name evidence="1" type="primary">kdsB</name>
    <name type="ordered locus">RMA_0542</name>
</gene>
<reference key="1">
    <citation type="journal article" date="2007" name="Genome Res.">
        <title>Lateral gene transfer between obligate intracellular bacteria: evidence from the Rickettsia massiliae genome.</title>
        <authorList>
            <person name="Blanc G."/>
            <person name="Ogata H."/>
            <person name="Robert C."/>
            <person name="Audic S."/>
            <person name="Claverie J.-M."/>
            <person name="Raoult D."/>
        </authorList>
    </citation>
    <scope>NUCLEOTIDE SEQUENCE [LARGE SCALE GENOMIC DNA]</scope>
    <source>
        <strain>Mtu5</strain>
    </source>
</reference>
<keyword id="KW-0963">Cytoplasm</keyword>
<keyword id="KW-0448">Lipopolysaccharide biosynthesis</keyword>
<keyword id="KW-0548">Nucleotidyltransferase</keyword>
<keyword id="KW-0808">Transferase</keyword>
<evidence type="ECO:0000255" key="1">
    <source>
        <dbReference type="HAMAP-Rule" id="MF_00057"/>
    </source>
</evidence>
<organism>
    <name type="scientific">Rickettsia massiliae (strain Mtu5)</name>
    <dbReference type="NCBI Taxonomy" id="416276"/>
    <lineage>
        <taxon>Bacteria</taxon>
        <taxon>Pseudomonadati</taxon>
        <taxon>Pseudomonadota</taxon>
        <taxon>Alphaproteobacteria</taxon>
        <taxon>Rickettsiales</taxon>
        <taxon>Rickettsiaceae</taxon>
        <taxon>Rickettsieae</taxon>
        <taxon>Rickettsia</taxon>
        <taxon>spotted fever group</taxon>
    </lineage>
</organism>
<proteinExistence type="inferred from homology"/>
<feature type="chain" id="PRO_1000057403" description="3-deoxy-manno-octulosonate cytidylyltransferase">
    <location>
        <begin position="1"/>
        <end position="246"/>
    </location>
</feature>
<sequence>MQHQDVAIIIPSRLSSTRLKQKPLQLIGSITLIERVFKQVNQAGLKHTYVATDSEEIASVIKKVGGKVIFTDSAIPTGTDRTYEAFKLIPNNQNINYIVNVQGDMPFIEPSSILKIIEYLKNSEYDIVTPIVKVDRESVEASSNVTVAVDSAGTALYFSRSLIPNGAEEFLYHVGMYGFRKNALEKFVSLKPTFLEKTERLEQLRVLENGMTIGTCLVENVPISVDTEEDLKKAVKFYENISKLGL</sequence>
<comment type="function">
    <text evidence="1">Activates KDO (a required 8-carbon sugar) for incorporation into bacterial lipopolysaccharide in Gram-negative bacteria.</text>
</comment>
<comment type="catalytic activity">
    <reaction evidence="1">
        <text>3-deoxy-alpha-D-manno-oct-2-ulosonate + CTP = CMP-3-deoxy-beta-D-manno-octulosonate + diphosphate</text>
        <dbReference type="Rhea" id="RHEA:23448"/>
        <dbReference type="ChEBI" id="CHEBI:33019"/>
        <dbReference type="ChEBI" id="CHEBI:37563"/>
        <dbReference type="ChEBI" id="CHEBI:85986"/>
        <dbReference type="ChEBI" id="CHEBI:85987"/>
        <dbReference type="EC" id="2.7.7.38"/>
    </reaction>
</comment>
<comment type="pathway">
    <text evidence="1">Nucleotide-sugar biosynthesis; CMP-3-deoxy-D-manno-octulosonate biosynthesis; CMP-3-deoxy-D-manno-octulosonate from 3-deoxy-D-manno-octulosonate and CTP: step 1/1.</text>
</comment>
<comment type="pathway">
    <text evidence="1">Bacterial outer membrane biogenesis; lipopolysaccharide biosynthesis.</text>
</comment>
<comment type="subcellular location">
    <subcellularLocation>
        <location evidence="1">Cytoplasm</location>
    </subcellularLocation>
</comment>
<comment type="similarity">
    <text evidence="1">Belongs to the KdsB family.</text>
</comment>
<accession>A8F1E9</accession>
<dbReference type="EC" id="2.7.7.38" evidence="1"/>
<dbReference type="EMBL" id="CP000683">
    <property type="protein sequence ID" value="ABV84735.1"/>
    <property type="molecule type" value="Genomic_DNA"/>
</dbReference>
<dbReference type="RefSeq" id="WP_012152710.1">
    <property type="nucleotide sequence ID" value="NC_009900.1"/>
</dbReference>
<dbReference type="SMR" id="A8F1E9"/>
<dbReference type="KEGG" id="rms:RMA_0542"/>
<dbReference type="HOGENOM" id="CLU_065038_0_1_5"/>
<dbReference type="UniPathway" id="UPA00030"/>
<dbReference type="UniPathway" id="UPA00358">
    <property type="reaction ID" value="UER00476"/>
</dbReference>
<dbReference type="Proteomes" id="UP000001311">
    <property type="component" value="Chromosome"/>
</dbReference>
<dbReference type="GO" id="GO:0005829">
    <property type="term" value="C:cytosol"/>
    <property type="evidence" value="ECO:0007669"/>
    <property type="project" value="TreeGrafter"/>
</dbReference>
<dbReference type="GO" id="GO:0008690">
    <property type="term" value="F:3-deoxy-manno-octulosonate cytidylyltransferase activity"/>
    <property type="evidence" value="ECO:0007669"/>
    <property type="project" value="UniProtKB-UniRule"/>
</dbReference>
<dbReference type="GO" id="GO:0033468">
    <property type="term" value="P:CMP-keto-3-deoxy-D-manno-octulosonic acid biosynthetic process"/>
    <property type="evidence" value="ECO:0007669"/>
    <property type="project" value="UniProtKB-UniRule"/>
</dbReference>
<dbReference type="GO" id="GO:0009103">
    <property type="term" value="P:lipopolysaccharide biosynthetic process"/>
    <property type="evidence" value="ECO:0007669"/>
    <property type="project" value="UniProtKB-UniRule"/>
</dbReference>
<dbReference type="CDD" id="cd02517">
    <property type="entry name" value="CMP-KDO-Synthetase"/>
    <property type="match status" value="1"/>
</dbReference>
<dbReference type="Gene3D" id="3.90.550.10">
    <property type="entry name" value="Spore Coat Polysaccharide Biosynthesis Protein SpsA, Chain A"/>
    <property type="match status" value="1"/>
</dbReference>
<dbReference type="HAMAP" id="MF_00057">
    <property type="entry name" value="KdsB"/>
    <property type="match status" value="1"/>
</dbReference>
<dbReference type="InterPro" id="IPR003329">
    <property type="entry name" value="Cytidylyl_trans"/>
</dbReference>
<dbReference type="InterPro" id="IPR004528">
    <property type="entry name" value="KdsB"/>
</dbReference>
<dbReference type="InterPro" id="IPR029044">
    <property type="entry name" value="Nucleotide-diphossugar_trans"/>
</dbReference>
<dbReference type="NCBIfam" id="TIGR00466">
    <property type="entry name" value="kdsB"/>
    <property type="match status" value="1"/>
</dbReference>
<dbReference type="NCBIfam" id="NF003948">
    <property type="entry name" value="PRK05450.1-1"/>
    <property type="match status" value="1"/>
</dbReference>
<dbReference type="NCBIfam" id="NF003952">
    <property type="entry name" value="PRK05450.1-5"/>
    <property type="match status" value="1"/>
</dbReference>
<dbReference type="PANTHER" id="PTHR42866">
    <property type="entry name" value="3-DEOXY-MANNO-OCTULOSONATE CYTIDYLYLTRANSFERASE"/>
    <property type="match status" value="1"/>
</dbReference>
<dbReference type="PANTHER" id="PTHR42866:SF2">
    <property type="entry name" value="3-DEOXY-MANNO-OCTULOSONATE CYTIDYLYLTRANSFERASE, MITOCHONDRIAL"/>
    <property type="match status" value="1"/>
</dbReference>
<dbReference type="Pfam" id="PF02348">
    <property type="entry name" value="CTP_transf_3"/>
    <property type="match status" value="1"/>
</dbReference>
<dbReference type="SUPFAM" id="SSF53448">
    <property type="entry name" value="Nucleotide-diphospho-sugar transferases"/>
    <property type="match status" value="1"/>
</dbReference>